<protein>
    <recommendedName>
        <fullName evidence="1">Cysteine desulfurase IscS</fullName>
        <ecNumber evidence="1">2.8.1.7</ecNumber>
    </recommendedName>
</protein>
<organism>
    <name type="scientific">Buchnera aphidicola subsp. Acyrthosiphon pisum (strain APS)</name>
    <name type="common">Acyrthosiphon pisum symbiotic bacterium</name>
    <dbReference type="NCBI Taxonomy" id="107806"/>
    <lineage>
        <taxon>Bacteria</taxon>
        <taxon>Pseudomonadati</taxon>
        <taxon>Pseudomonadota</taxon>
        <taxon>Gammaproteobacteria</taxon>
        <taxon>Enterobacterales</taxon>
        <taxon>Erwiniaceae</taxon>
        <taxon>Buchnera</taxon>
    </lineage>
</organism>
<proteinExistence type="inferred from homology"/>
<reference key="1">
    <citation type="journal article" date="2000" name="Nature">
        <title>Genome sequence of the endocellular bacterial symbiont of aphids Buchnera sp. APS.</title>
        <authorList>
            <person name="Shigenobu S."/>
            <person name="Watanabe H."/>
            <person name="Hattori M."/>
            <person name="Sakaki Y."/>
            <person name="Ishikawa H."/>
        </authorList>
    </citation>
    <scope>NUCLEOTIDE SEQUENCE [LARGE SCALE GENOMIC DNA]</scope>
    <source>
        <strain>APS</strain>
    </source>
</reference>
<evidence type="ECO:0000255" key="1">
    <source>
        <dbReference type="HAMAP-Rule" id="MF_00331"/>
    </source>
</evidence>
<feature type="chain" id="PRO_0000150261" description="Cysteine desulfurase IscS">
    <location>
        <begin position="1"/>
        <end position="404"/>
    </location>
</feature>
<feature type="active site" description="Cysteine persulfide intermediate" evidence="1">
    <location>
        <position position="328"/>
    </location>
</feature>
<feature type="binding site" evidence="1">
    <location>
        <begin position="75"/>
        <end position="76"/>
    </location>
    <ligand>
        <name>pyridoxal 5'-phosphate</name>
        <dbReference type="ChEBI" id="CHEBI:597326"/>
    </ligand>
</feature>
<feature type="binding site" evidence="1">
    <location>
        <position position="155"/>
    </location>
    <ligand>
        <name>pyridoxal 5'-phosphate</name>
        <dbReference type="ChEBI" id="CHEBI:597326"/>
    </ligand>
</feature>
<feature type="binding site" evidence="1">
    <location>
        <position position="183"/>
    </location>
    <ligand>
        <name>pyridoxal 5'-phosphate</name>
        <dbReference type="ChEBI" id="CHEBI:597326"/>
    </ligand>
</feature>
<feature type="binding site" evidence="1">
    <location>
        <begin position="203"/>
        <end position="205"/>
    </location>
    <ligand>
        <name>pyridoxal 5'-phosphate</name>
        <dbReference type="ChEBI" id="CHEBI:597326"/>
    </ligand>
</feature>
<feature type="binding site" evidence="1">
    <location>
        <position position="243"/>
    </location>
    <ligand>
        <name>pyridoxal 5'-phosphate</name>
        <dbReference type="ChEBI" id="CHEBI:597326"/>
    </ligand>
</feature>
<feature type="binding site" description="via persulfide group" evidence="1">
    <location>
        <position position="328"/>
    </location>
    <ligand>
        <name>[2Fe-2S] cluster</name>
        <dbReference type="ChEBI" id="CHEBI:190135"/>
        <note>ligand shared with IscU</note>
    </ligand>
</feature>
<feature type="modified residue" description="N6-(pyridoxal phosphate)lysine" evidence="1">
    <location>
        <position position="206"/>
    </location>
</feature>
<keyword id="KW-0001">2Fe-2S</keyword>
<keyword id="KW-0963">Cytoplasm</keyword>
<keyword id="KW-0408">Iron</keyword>
<keyword id="KW-0411">Iron-sulfur</keyword>
<keyword id="KW-0479">Metal-binding</keyword>
<keyword id="KW-0663">Pyridoxal phosphate</keyword>
<keyword id="KW-1185">Reference proteome</keyword>
<keyword id="KW-0808">Transferase</keyword>
<sequence>MKTPIYLDYAATTPVEFEVAKKMMNYLTIDGVFGNSASRSHKFGWKAEEVVDIARNQISELIGADSREIVFTSGATESNNLAIKGIASFHQNKGKHIVTSKTEHKSVLDTCRYLENKGFTVTYLTPKNNGIIDLNNLKKNIKKDTILVSIMHVNNEIGIIQDINSISQICRNHGVFFHVDATQSVGKIPIDLKKIPIDLMSFSAHKIYGPKGIGGLYVRRKPRVRLLSLIHGGGHERGMRSGTLPVHQIVGMGESFVLAKRKIHDDFIHLTKLKNILWNGIKNIEEVYLNSDLQQGAPHILNVSFNYVEGESLIMALKDLAISSGSACTSASLEPSYVLKSLGIRDELAHSSIRFSIGRFTTEKEIIHAIKLVHKSIHRLRELSPLWEMFKSGVDLNSIEWDHV</sequence>
<dbReference type="EC" id="2.8.1.7" evidence="1"/>
<dbReference type="EMBL" id="BA000003">
    <property type="protein sequence ID" value="BAB13286.1"/>
    <property type="molecule type" value="Genomic_DNA"/>
</dbReference>
<dbReference type="RefSeq" id="NP_240400.1">
    <property type="nucleotide sequence ID" value="NC_002528.1"/>
</dbReference>
<dbReference type="RefSeq" id="WP_009874549.1">
    <property type="nucleotide sequence ID" value="NZ_AP036055.1"/>
</dbReference>
<dbReference type="SMR" id="P57657"/>
<dbReference type="STRING" id="563178.BUAP5A_594"/>
<dbReference type="EnsemblBacteria" id="BAB13286">
    <property type="protein sequence ID" value="BAB13286"/>
    <property type="gene ID" value="BAB13286"/>
</dbReference>
<dbReference type="KEGG" id="buc:BU602"/>
<dbReference type="PATRIC" id="fig|107806.10.peg.604"/>
<dbReference type="eggNOG" id="COG1104">
    <property type="taxonomic scope" value="Bacteria"/>
</dbReference>
<dbReference type="HOGENOM" id="CLU_003433_0_2_6"/>
<dbReference type="UniPathway" id="UPA00266"/>
<dbReference type="Proteomes" id="UP000001806">
    <property type="component" value="Chromosome"/>
</dbReference>
<dbReference type="GO" id="GO:1990221">
    <property type="term" value="C:L-cysteine desulfurase complex"/>
    <property type="evidence" value="ECO:0007669"/>
    <property type="project" value="UniProtKB-ARBA"/>
</dbReference>
<dbReference type="GO" id="GO:0051537">
    <property type="term" value="F:2 iron, 2 sulfur cluster binding"/>
    <property type="evidence" value="ECO:0007669"/>
    <property type="project" value="UniProtKB-UniRule"/>
</dbReference>
<dbReference type="GO" id="GO:0031071">
    <property type="term" value="F:cysteine desulfurase activity"/>
    <property type="evidence" value="ECO:0007669"/>
    <property type="project" value="UniProtKB-UniRule"/>
</dbReference>
<dbReference type="GO" id="GO:0046872">
    <property type="term" value="F:metal ion binding"/>
    <property type="evidence" value="ECO:0007669"/>
    <property type="project" value="UniProtKB-KW"/>
</dbReference>
<dbReference type="GO" id="GO:0030170">
    <property type="term" value="F:pyridoxal phosphate binding"/>
    <property type="evidence" value="ECO:0007669"/>
    <property type="project" value="UniProtKB-UniRule"/>
</dbReference>
<dbReference type="GO" id="GO:0044571">
    <property type="term" value="P:[2Fe-2S] cluster assembly"/>
    <property type="evidence" value="ECO:0007669"/>
    <property type="project" value="UniProtKB-UniRule"/>
</dbReference>
<dbReference type="FunFam" id="3.40.640.10:FF:000003">
    <property type="entry name" value="Cysteine desulfurase IscS"/>
    <property type="match status" value="1"/>
</dbReference>
<dbReference type="FunFam" id="3.90.1150.10:FF:000002">
    <property type="entry name" value="Cysteine desulfurase IscS"/>
    <property type="match status" value="1"/>
</dbReference>
<dbReference type="Gene3D" id="3.90.1150.10">
    <property type="entry name" value="Aspartate Aminotransferase, domain 1"/>
    <property type="match status" value="1"/>
</dbReference>
<dbReference type="Gene3D" id="3.40.640.10">
    <property type="entry name" value="Type I PLP-dependent aspartate aminotransferase-like (Major domain)"/>
    <property type="match status" value="1"/>
</dbReference>
<dbReference type="HAMAP" id="MF_00331">
    <property type="entry name" value="Cys_desulf_IscS"/>
    <property type="match status" value="1"/>
</dbReference>
<dbReference type="InterPro" id="IPR000192">
    <property type="entry name" value="Aminotrans_V_dom"/>
</dbReference>
<dbReference type="InterPro" id="IPR020578">
    <property type="entry name" value="Aminotrans_V_PyrdxlP_BS"/>
</dbReference>
<dbReference type="InterPro" id="IPR010240">
    <property type="entry name" value="Cys_deSase_IscS"/>
</dbReference>
<dbReference type="InterPro" id="IPR016454">
    <property type="entry name" value="Cysteine_dSase"/>
</dbReference>
<dbReference type="InterPro" id="IPR015424">
    <property type="entry name" value="PyrdxlP-dep_Trfase"/>
</dbReference>
<dbReference type="InterPro" id="IPR015421">
    <property type="entry name" value="PyrdxlP-dep_Trfase_major"/>
</dbReference>
<dbReference type="InterPro" id="IPR015422">
    <property type="entry name" value="PyrdxlP-dep_Trfase_small"/>
</dbReference>
<dbReference type="NCBIfam" id="TIGR02006">
    <property type="entry name" value="IscS"/>
    <property type="match status" value="1"/>
</dbReference>
<dbReference type="NCBIfam" id="NF002806">
    <property type="entry name" value="PRK02948.1"/>
    <property type="match status" value="1"/>
</dbReference>
<dbReference type="NCBIfam" id="NF010611">
    <property type="entry name" value="PRK14012.1"/>
    <property type="match status" value="1"/>
</dbReference>
<dbReference type="PANTHER" id="PTHR11601:SF34">
    <property type="entry name" value="CYSTEINE DESULFURASE"/>
    <property type="match status" value="1"/>
</dbReference>
<dbReference type="PANTHER" id="PTHR11601">
    <property type="entry name" value="CYSTEINE DESULFURYLASE FAMILY MEMBER"/>
    <property type="match status" value="1"/>
</dbReference>
<dbReference type="Pfam" id="PF00266">
    <property type="entry name" value="Aminotran_5"/>
    <property type="match status" value="1"/>
</dbReference>
<dbReference type="PIRSF" id="PIRSF005572">
    <property type="entry name" value="NifS"/>
    <property type="match status" value="1"/>
</dbReference>
<dbReference type="SUPFAM" id="SSF53383">
    <property type="entry name" value="PLP-dependent transferases"/>
    <property type="match status" value="1"/>
</dbReference>
<dbReference type="PROSITE" id="PS00595">
    <property type="entry name" value="AA_TRANSFER_CLASS_5"/>
    <property type="match status" value="1"/>
</dbReference>
<name>ISCS_BUCAI</name>
<accession>P57657</accession>
<gene>
    <name evidence="1" type="primary">iscS</name>
    <name type="ordered locus">BU602</name>
</gene>
<comment type="function">
    <text evidence="1">Master enzyme that delivers sulfur to a number of partners involved in Fe-S cluster assembly, tRNA modification or cofactor biosynthesis. Catalyzes the removal of elemental sulfur atoms from cysteine to produce alanine. Functions as a sulfur delivery protein for Fe-S cluster synthesis onto IscU, an Fe-S scaffold assembly protein, as well as other S acceptor proteins.</text>
</comment>
<comment type="catalytic activity">
    <reaction evidence="1">
        <text>(sulfur carrier)-H + L-cysteine = (sulfur carrier)-SH + L-alanine</text>
        <dbReference type="Rhea" id="RHEA:43892"/>
        <dbReference type="Rhea" id="RHEA-COMP:14737"/>
        <dbReference type="Rhea" id="RHEA-COMP:14739"/>
        <dbReference type="ChEBI" id="CHEBI:29917"/>
        <dbReference type="ChEBI" id="CHEBI:35235"/>
        <dbReference type="ChEBI" id="CHEBI:57972"/>
        <dbReference type="ChEBI" id="CHEBI:64428"/>
        <dbReference type="EC" id="2.8.1.7"/>
    </reaction>
</comment>
<comment type="cofactor">
    <cofactor evidence="1">
        <name>pyridoxal 5'-phosphate</name>
        <dbReference type="ChEBI" id="CHEBI:597326"/>
    </cofactor>
</comment>
<comment type="pathway">
    <text evidence="1">Cofactor biosynthesis; iron-sulfur cluster biosynthesis.</text>
</comment>
<comment type="subunit">
    <text evidence="1">Homodimer. Forms a heterotetramer with IscU, interacts with other sulfur acceptors.</text>
</comment>
<comment type="subcellular location">
    <subcellularLocation>
        <location evidence="1">Cytoplasm</location>
    </subcellularLocation>
</comment>
<comment type="similarity">
    <text evidence="1">Belongs to the class-V pyridoxal-phosphate-dependent aminotransferase family. NifS/IscS subfamily.</text>
</comment>